<organism>
    <name type="scientific">Ureaplasma parvum serovar 3 (strain ATCC 700970)</name>
    <dbReference type="NCBI Taxonomy" id="273119"/>
    <lineage>
        <taxon>Bacteria</taxon>
        <taxon>Bacillati</taxon>
        <taxon>Mycoplasmatota</taxon>
        <taxon>Mycoplasmoidales</taxon>
        <taxon>Mycoplasmoidaceae</taxon>
        <taxon>Ureaplasma</taxon>
    </lineage>
</organism>
<accession>Q9PQ93</accession>
<gene>
    <name type="primary">rnhC</name>
    <name type="ordered locus">UU397</name>
</gene>
<dbReference type="EC" id="3.1.26.4"/>
<dbReference type="EMBL" id="AF222894">
    <property type="protein sequence ID" value="AAF30807.1"/>
    <property type="molecule type" value="Genomic_DNA"/>
</dbReference>
<dbReference type="RefSeq" id="WP_006689032.1">
    <property type="nucleotide sequence ID" value="NC_002162.1"/>
</dbReference>
<dbReference type="SMR" id="Q9PQ93"/>
<dbReference type="STRING" id="273119.UU397"/>
<dbReference type="EnsemblBacteria" id="AAF30807">
    <property type="protein sequence ID" value="AAF30807"/>
    <property type="gene ID" value="UU397"/>
</dbReference>
<dbReference type="GeneID" id="29672376"/>
<dbReference type="KEGG" id="uur:UU397"/>
<dbReference type="eggNOG" id="COG1039">
    <property type="taxonomic scope" value="Bacteria"/>
</dbReference>
<dbReference type="HOGENOM" id="CLU_059546_1_0_14"/>
<dbReference type="OrthoDB" id="9777935at2"/>
<dbReference type="Proteomes" id="UP000000423">
    <property type="component" value="Chromosome"/>
</dbReference>
<dbReference type="GO" id="GO:0005737">
    <property type="term" value="C:cytoplasm"/>
    <property type="evidence" value="ECO:0007669"/>
    <property type="project" value="UniProtKB-SubCell"/>
</dbReference>
<dbReference type="GO" id="GO:0032299">
    <property type="term" value="C:ribonuclease H2 complex"/>
    <property type="evidence" value="ECO:0007669"/>
    <property type="project" value="TreeGrafter"/>
</dbReference>
<dbReference type="GO" id="GO:0000287">
    <property type="term" value="F:magnesium ion binding"/>
    <property type="evidence" value="ECO:0007669"/>
    <property type="project" value="UniProtKB-UniRule"/>
</dbReference>
<dbReference type="GO" id="GO:0003723">
    <property type="term" value="F:RNA binding"/>
    <property type="evidence" value="ECO:0007669"/>
    <property type="project" value="InterPro"/>
</dbReference>
<dbReference type="GO" id="GO:0004523">
    <property type="term" value="F:RNA-DNA hybrid ribonuclease activity"/>
    <property type="evidence" value="ECO:0007669"/>
    <property type="project" value="UniProtKB-UniRule"/>
</dbReference>
<dbReference type="GO" id="GO:0043137">
    <property type="term" value="P:DNA replication, removal of RNA primer"/>
    <property type="evidence" value="ECO:0007669"/>
    <property type="project" value="TreeGrafter"/>
</dbReference>
<dbReference type="GO" id="GO:0006298">
    <property type="term" value="P:mismatch repair"/>
    <property type="evidence" value="ECO:0007669"/>
    <property type="project" value="TreeGrafter"/>
</dbReference>
<dbReference type="CDD" id="cd06590">
    <property type="entry name" value="RNase_HII_bacteria_HIII_like"/>
    <property type="match status" value="1"/>
</dbReference>
<dbReference type="Gene3D" id="3.30.420.10">
    <property type="entry name" value="Ribonuclease H-like superfamily/Ribonuclease H"/>
    <property type="match status" value="1"/>
</dbReference>
<dbReference type="HAMAP" id="MF_00053">
    <property type="entry name" value="RNase_HIII"/>
    <property type="match status" value="1"/>
</dbReference>
<dbReference type="InterPro" id="IPR001352">
    <property type="entry name" value="RNase_HII/HIII"/>
</dbReference>
<dbReference type="InterPro" id="IPR024567">
    <property type="entry name" value="RNase_HII/HIII_dom"/>
</dbReference>
<dbReference type="InterPro" id="IPR004641">
    <property type="entry name" value="RNase_HIII"/>
</dbReference>
<dbReference type="InterPro" id="IPR012337">
    <property type="entry name" value="RNaseH-like_sf"/>
</dbReference>
<dbReference type="InterPro" id="IPR036397">
    <property type="entry name" value="RNaseH_sf"/>
</dbReference>
<dbReference type="PANTHER" id="PTHR10954:SF23">
    <property type="entry name" value="RIBONUCLEASE"/>
    <property type="match status" value="1"/>
</dbReference>
<dbReference type="PANTHER" id="PTHR10954">
    <property type="entry name" value="RIBONUCLEASE H2 SUBUNIT A"/>
    <property type="match status" value="1"/>
</dbReference>
<dbReference type="Pfam" id="PF01351">
    <property type="entry name" value="RNase_HII"/>
    <property type="match status" value="1"/>
</dbReference>
<dbReference type="PIRSF" id="PIRSF037748">
    <property type="entry name" value="RnhC"/>
    <property type="match status" value="1"/>
</dbReference>
<dbReference type="SUPFAM" id="SSF53098">
    <property type="entry name" value="Ribonuclease H-like"/>
    <property type="match status" value="1"/>
</dbReference>
<dbReference type="PROSITE" id="PS51975">
    <property type="entry name" value="RNASE_H_2"/>
    <property type="match status" value="1"/>
</dbReference>
<proteinExistence type="inferred from homology"/>
<sequence length="316" mass="36418">MAIVSVKLTSNQVDKFLILWRPYLVHNNHNYAKYTFKIDGTLIIIYNTNTCTINTHDINSFLNTFLKREDLTLFNVIKQQVNTKKNNQNVMSQSEIYESAQVIIGSDEVGVGDLFGGIVVCAVSLKKSDFKKINHLKIIDSKKLNDQQMQEIYQQIKNQISYTIVSYNPKEYNELIKEYNNAHILKTILHYKALQSEIHKHAKYSIFSVVDAFSSLKNWNQYLQKVNFQPYEPNLLIPKAESIYTSVALASIIARVMFLKMIAIIEEQFNVKIPLGSSNPLVNDVASNIFQKFGLKILKQVAKEHFSNFQQIIKNK</sequence>
<reference key="1">
    <citation type="journal article" date="2000" name="Nature">
        <title>The complete sequence of the mucosal pathogen Ureaplasma urealyticum.</title>
        <authorList>
            <person name="Glass J.I."/>
            <person name="Lefkowitz E.J."/>
            <person name="Glass J.S."/>
            <person name="Heiner C.R."/>
            <person name="Chen E.Y."/>
            <person name="Cassell G.H."/>
        </authorList>
    </citation>
    <scope>NUCLEOTIDE SEQUENCE [LARGE SCALE GENOMIC DNA]</scope>
    <source>
        <strain>ATCC 700970</strain>
    </source>
</reference>
<comment type="function">
    <text evidence="1">Endonuclease that specifically degrades the RNA of RNA-DNA hybrids.</text>
</comment>
<comment type="catalytic activity">
    <reaction>
        <text>Endonucleolytic cleavage to 5'-phosphomonoester.</text>
        <dbReference type="EC" id="3.1.26.4"/>
    </reaction>
</comment>
<comment type="cofactor">
    <cofactor evidence="1">
        <name>Mn(2+)</name>
        <dbReference type="ChEBI" id="CHEBI:29035"/>
    </cofactor>
    <cofactor evidence="1">
        <name>Mg(2+)</name>
        <dbReference type="ChEBI" id="CHEBI:18420"/>
    </cofactor>
    <text evidence="1">Manganese or magnesium. Binds 1 divalent metal ion per monomer in the absence of substrate. May bind a second metal ion after substrate binding.</text>
</comment>
<comment type="subcellular location">
    <subcellularLocation>
        <location evidence="3">Cytoplasm</location>
    </subcellularLocation>
</comment>
<comment type="similarity">
    <text evidence="3">Belongs to the RNase HII family. RnhC subfamily.</text>
</comment>
<protein>
    <recommendedName>
        <fullName>Ribonuclease HIII</fullName>
        <shortName>RNase HIII</shortName>
        <ecNumber>3.1.26.4</ecNumber>
    </recommendedName>
</protein>
<name>RNH3_UREPA</name>
<keyword id="KW-0963">Cytoplasm</keyword>
<keyword id="KW-0255">Endonuclease</keyword>
<keyword id="KW-0378">Hydrolase</keyword>
<keyword id="KW-0460">Magnesium</keyword>
<keyword id="KW-0479">Metal-binding</keyword>
<keyword id="KW-0540">Nuclease</keyword>
<keyword id="KW-1185">Reference proteome</keyword>
<evidence type="ECO:0000250" key="1"/>
<evidence type="ECO:0000255" key="2">
    <source>
        <dbReference type="PROSITE-ProRule" id="PRU01319"/>
    </source>
</evidence>
<evidence type="ECO:0000305" key="3"/>
<feature type="chain" id="PRO_0000111709" description="Ribonuclease HIII">
    <location>
        <begin position="1"/>
        <end position="316"/>
    </location>
</feature>
<feature type="domain" description="RNase H type-2" evidence="2">
    <location>
        <begin position="101"/>
        <end position="316"/>
    </location>
</feature>
<feature type="binding site" evidence="1">
    <location>
        <position position="107"/>
    </location>
    <ligand>
        <name>a divalent metal cation</name>
        <dbReference type="ChEBI" id="CHEBI:60240"/>
    </ligand>
</feature>
<feature type="binding site" evidence="1">
    <location>
        <position position="108"/>
    </location>
    <ligand>
        <name>a divalent metal cation</name>
        <dbReference type="ChEBI" id="CHEBI:60240"/>
    </ligand>
</feature>
<feature type="binding site" evidence="1">
    <location>
        <position position="211"/>
    </location>
    <ligand>
        <name>a divalent metal cation</name>
        <dbReference type="ChEBI" id="CHEBI:60240"/>
    </ligand>
</feature>